<proteinExistence type="inferred from homology"/>
<keyword id="KW-0067">ATP-binding</keyword>
<keyword id="KW-0342">GTP-binding</keyword>
<keyword id="KW-0547">Nucleotide-binding</keyword>
<keyword id="KW-1185">Reference proteome</keyword>
<sequence>MVLEIVLITGMSGSGKSVALHALEDAGYYCVDNLPPQLLPAFVALEHHHHGNRVAIAMDVRSATSLHQVPQELHRLRSQGVAVQSIFLDATIDTLVRRFSETRRRHPLSHDDPQQERKALVQIIDLERELLADLREASHVIDTSQIRASQLQSYVKSLMPGAQGQLTLVFQSFAFKRGIPMDADYVFDVRMLANPYYEPALRELTGLDEPVADFLQLQPDVDLMRAHIEQFLAHWLELLDRNHRSYVTVAIGCTGGQHRSVYLVERLAQSFGNRWTALKRHRELDGRQ</sequence>
<evidence type="ECO:0000255" key="1">
    <source>
        <dbReference type="HAMAP-Rule" id="MF_00636"/>
    </source>
</evidence>
<gene>
    <name type="ordered locus">Veis_1053</name>
</gene>
<organism>
    <name type="scientific">Verminephrobacter eiseniae (strain EF01-2)</name>
    <dbReference type="NCBI Taxonomy" id="391735"/>
    <lineage>
        <taxon>Bacteria</taxon>
        <taxon>Pseudomonadati</taxon>
        <taxon>Pseudomonadota</taxon>
        <taxon>Betaproteobacteria</taxon>
        <taxon>Burkholderiales</taxon>
        <taxon>Comamonadaceae</taxon>
        <taxon>Verminephrobacter</taxon>
    </lineage>
</organism>
<accession>A1WGS2</accession>
<protein>
    <recommendedName>
        <fullName evidence="1">Nucleotide-binding protein Veis_1053</fullName>
    </recommendedName>
</protein>
<feature type="chain" id="PRO_0000383303" description="Nucleotide-binding protein Veis_1053">
    <location>
        <begin position="1"/>
        <end position="288"/>
    </location>
</feature>
<feature type="binding site" evidence="1">
    <location>
        <begin position="10"/>
        <end position="17"/>
    </location>
    <ligand>
        <name>ATP</name>
        <dbReference type="ChEBI" id="CHEBI:30616"/>
    </ligand>
</feature>
<feature type="binding site" evidence="1">
    <location>
        <begin position="59"/>
        <end position="62"/>
    </location>
    <ligand>
        <name>GTP</name>
        <dbReference type="ChEBI" id="CHEBI:37565"/>
    </ligand>
</feature>
<name>Y1053_VEREI</name>
<comment type="function">
    <text evidence="1">Displays ATPase and GTPase activities.</text>
</comment>
<comment type="similarity">
    <text evidence="1">Belongs to the RapZ-like family.</text>
</comment>
<reference key="1">
    <citation type="submission" date="2006-12" db="EMBL/GenBank/DDBJ databases">
        <title>Complete sequence of chromosome 1 of Verminephrobacter eiseniae EF01-2.</title>
        <authorList>
            <person name="Copeland A."/>
            <person name="Lucas S."/>
            <person name="Lapidus A."/>
            <person name="Barry K."/>
            <person name="Detter J.C."/>
            <person name="Glavina del Rio T."/>
            <person name="Dalin E."/>
            <person name="Tice H."/>
            <person name="Pitluck S."/>
            <person name="Chertkov O."/>
            <person name="Brettin T."/>
            <person name="Bruce D."/>
            <person name="Han C."/>
            <person name="Tapia R."/>
            <person name="Gilna P."/>
            <person name="Schmutz J."/>
            <person name="Larimer F."/>
            <person name="Land M."/>
            <person name="Hauser L."/>
            <person name="Kyrpides N."/>
            <person name="Kim E."/>
            <person name="Stahl D."/>
            <person name="Richardson P."/>
        </authorList>
    </citation>
    <scope>NUCLEOTIDE SEQUENCE [LARGE SCALE GENOMIC DNA]</scope>
    <source>
        <strain>EF01-2</strain>
    </source>
</reference>
<dbReference type="EMBL" id="CP000542">
    <property type="protein sequence ID" value="ABM56829.1"/>
    <property type="molecule type" value="Genomic_DNA"/>
</dbReference>
<dbReference type="RefSeq" id="WP_011808841.1">
    <property type="nucleotide sequence ID" value="NC_008786.1"/>
</dbReference>
<dbReference type="SMR" id="A1WGS2"/>
<dbReference type="STRING" id="391735.Veis_1053"/>
<dbReference type="GeneID" id="76459729"/>
<dbReference type="KEGG" id="vei:Veis_1053"/>
<dbReference type="eggNOG" id="COG1660">
    <property type="taxonomic scope" value="Bacteria"/>
</dbReference>
<dbReference type="HOGENOM" id="CLU_059558_1_1_4"/>
<dbReference type="OrthoDB" id="9784461at2"/>
<dbReference type="Proteomes" id="UP000000374">
    <property type="component" value="Chromosome"/>
</dbReference>
<dbReference type="GO" id="GO:0005524">
    <property type="term" value="F:ATP binding"/>
    <property type="evidence" value="ECO:0007669"/>
    <property type="project" value="UniProtKB-UniRule"/>
</dbReference>
<dbReference type="GO" id="GO:0005525">
    <property type="term" value="F:GTP binding"/>
    <property type="evidence" value="ECO:0007669"/>
    <property type="project" value="UniProtKB-UniRule"/>
</dbReference>
<dbReference type="Gene3D" id="3.40.50.300">
    <property type="entry name" value="P-loop containing nucleotide triphosphate hydrolases"/>
    <property type="match status" value="1"/>
</dbReference>
<dbReference type="HAMAP" id="MF_00636">
    <property type="entry name" value="RapZ_like"/>
    <property type="match status" value="1"/>
</dbReference>
<dbReference type="InterPro" id="IPR027417">
    <property type="entry name" value="P-loop_NTPase"/>
</dbReference>
<dbReference type="InterPro" id="IPR005337">
    <property type="entry name" value="RapZ-like"/>
</dbReference>
<dbReference type="InterPro" id="IPR053930">
    <property type="entry name" value="RapZ-like_N"/>
</dbReference>
<dbReference type="InterPro" id="IPR053931">
    <property type="entry name" value="RapZ_C"/>
</dbReference>
<dbReference type="NCBIfam" id="NF003828">
    <property type="entry name" value="PRK05416.1"/>
    <property type="match status" value="1"/>
</dbReference>
<dbReference type="PANTHER" id="PTHR30448">
    <property type="entry name" value="RNASE ADAPTER PROTEIN RAPZ"/>
    <property type="match status" value="1"/>
</dbReference>
<dbReference type="PANTHER" id="PTHR30448:SF0">
    <property type="entry name" value="RNASE ADAPTER PROTEIN RAPZ"/>
    <property type="match status" value="1"/>
</dbReference>
<dbReference type="Pfam" id="PF22740">
    <property type="entry name" value="PapZ_C"/>
    <property type="match status" value="1"/>
</dbReference>
<dbReference type="Pfam" id="PF03668">
    <property type="entry name" value="RapZ-like_N"/>
    <property type="match status" value="1"/>
</dbReference>
<dbReference type="PIRSF" id="PIRSF005052">
    <property type="entry name" value="P-loopkin"/>
    <property type="match status" value="1"/>
</dbReference>
<dbReference type="SUPFAM" id="SSF52540">
    <property type="entry name" value="P-loop containing nucleoside triphosphate hydrolases"/>
    <property type="match status" value="1"/>
</dbReference>